<protein>
    <recommendedName>
        <fullName evidence="1">Arginine--tRNA ligase</fullName>
        <ecNumber evidence="1">6.1.1.19</ecNumber>
    </recommendedName>
    <alternativeName>
        <fullName evidence="1">Arginyl-tRNA synthetase</fullName>
        <shortName evidence="1">ArgRS</shortName>
    </alternativeName>
</protein>
<evidence type="ECO:0000255" key="1">
    <source>
        <dbReference type="HAMAP-Rule" id="MF_00123"/>
    </source>
</evidence>
<feature type="chain" id="PRO_1000203088" description="Arginine--tRNA ligase">
    <location>
        <begin position="1"/>
        <end position="563"/>
    </location>
</feature>
<feature type="short sequence motif" description="'HIGH' region">
    <location>
        <begin position="120"/>
        <end position="130"/>
    </location>
</feature>
<sequence>MDYKNLVAERIKENTELEVDLIEKLIEIPPKKEMGDYAFPCFQLAKTFRKAPNLIAEELKEKINKEGFEKVVTVGPYLNFFVDKTILIKDVLEKVLSEKEKYGSSKVGEGKNVVVEYSSPNIAKPFHIGHLFTTAIGNALYKILSFEGYNCIGINHLGDWGTQFGKLISAYRRWVDEEALEKDAIGELLRIYVKFHEEAEKDPELEKEARLNFKRLEEGSEEETELWNRFKDLSLKEFNKVYDMLGIKFDSLAGESFYSDKMDAVVQEIDDKGLLVDSNGAKVVMLDEYNMPPCMIKKSDGATIYATRDLAAAIYRKKTYDFHKCIYVVGTPQALHFKQVFTTLKLMGHDWADDCKHVGFGLVKLANKKLSTRNGDVVFLEDLLNQSVEETLKIINEKNPNLKNKEDVAKKLGIGAVVFTYLKNNRERDIVFDWKEILSFDGETGPYVEYSYARGKSILRKAGELTGEADYSKLSSKEEFELAKLLGGFNDAIMNAIDKLEPAIVTRYVIEVAKAFNKFYNAHGILNAEDNDVKLARVKLVEATCQVIKNALNLLGIDVVEEM</sequence>
<gene>
    <name evidence="1" type="primary">argS</name>
    <name type="ordered locus">CLJ_B1122</name>
</gene>
<comment type="catalytic activity">
    <reaction evidence="1">
        <text>tRNA(Arg) + L-arginine + ATP = L-arginyl-tRNA(Arg) + AMP + diphosphate</text>
        <dbReference type="Rhea" id="RHEA:20301"/>
        <dbReference type="Rhea" id="RHEA-COMP:9658"/>
        <dbReference type="Rhea" id="RHEA-COMP:9673"/>
        <dbReference type="ChEBI" id="CHEBI:30616"/>
        <dbReference type="ChEBI" id="CHEBI:32682"/>
        <dbReference type="ChEBI" id="CHEBI:33019"/>
        <dbReference type="ChEBI" id="CHEBI:78442"/>
        <dbReference type="ChEBI" id="CHEBI:78513"/>
        <dbReference type="ChEBI" id="CHEBI:456215"/>
        <dbReference type="EC" id="6.1.1.19"/>
    </reaction>
</comment>
<comment type="subunit">
    <text evidence="1">Monomer.</text>
</comment>
<comment type="subcellular location">
    <subcellularLocation>
        <location evidence="1">Cytoplasm</location>
    </subcellularLocation>
</comment>
<comment type="similarity">
    <text evidence="1">Belongs to the class-I aminoacyl-tRNA synthetase family.</text>
</comment>
<proteinExistence type="inferred from homology"/>
<keyword id="KW-0030">Aminoacyl-tRNA synthetase</keyword>
<keyword id="KW-0067">ATP-binding</keyword>
<keyword id="KW-0963">Cytoplasm</keyword>
<keyword id="KW-0436">Ligase</keyword>
<keyword id="KW-0547">Nucleotide-binding</keyword>
<keyword id="KW-0648">Protein biosynthesis</keyword>
<organism>
    <name type="scientific">Clostridium botulinum (strain 657 / Type Ba4)</name>
    <dbReference type="NCBI Taxonomy" id="515621"/>
    <lineage>
        <taxon>Bacteria</taxon>
        <taxon>Bacillati</taxon>
        <taxon>Bacillota</taxon>
        <taxon>Clostridia</taxon>
        <taxon>Eubacteriales</taxon>
        <taxon>Clostridiaceae</taxon>
        <taxon>Clostridium</taxon>
    </lineage>
</organism>
<name>SYR_CLOB6</name>
<accession>C3KSZ0</accession>
<dbReference type="EC" id="6.1.1.19" evidence="1"/>
<dbReference type="EMBL" id="CP001083">
    <property type="protein sequence ID" value="ACQ52864.1"/>
    <property type="molecule type" value="Genomic_DNA"/>
</dbReference>
<dbReference type="RefSeq" id="WP_012720779.1">
    <property type="nucleotide sequence ID" value="NC_012658.1"/>
</dbReference>
<dbReference type="SMR" id="C3KSZ0"/>
<dbReference type="KEGG" id="cbi:CLJ_B1122"/>
<dbReference type="HOGENOM" id="CLU_006406_6_1_9"/>
<dbReference type="Proteomes" id="UP000002333">
    <property type="component" value="Chromosome"/>
</dbReference>
<dbReference type="GO" id="GO:0005737">
    <property type="term" value="C:cytoplasm"/>
    <property type="evidence" value="ECO:0007669"/>
    <property type="project" value="UniProtKB-SubCell"/>
</dbReference>
<dbReference type="GO" id="GO:0004814">
    <property type="term" value="F:arginine-tRNA ligase activity"/>
    <property type="evidence" value="ECO:0007669"/>
    <property type="project" value="UniProtKB-UniRule"/>
</dbReference>
<dbReference type="GO" id="GO:0005524">
    <property type="term" value="F:ATP binding"/>
    <property type="evidence" value="ECO:0007669"/>
    <property type="project" value="UniProtKB-UniRule"/>
</dbReference>
<dbReference type="GO" id="GO:0006420">
    <property type="term" value="P:arginyl-tRNA aminoacylation"/>
    <property type="evidence" value="ECO:0007669"/>
    <property type="project" value="UniProtKB-UniRule"/>
</dbReference>
<dbReference type="CDD" id="cd07956">
    <property type="entry name" value="Anticodon_Ia_Arg"/>
    <property type="match status" value="1"/>
</dbReference>
<dbReference type="CDD" id="cd00671">
    <property type="entry name" value="ArgRS_core"/>
    <property type="match status" value="1"/>
</dbReference>
<dbReference type="FunFam" id="1.10.730.10:FF:000008">
    <property type="entry name" value="Arginine--tRNA ligase"/>
    <property type="match status" value="1"/>
</dbReference>
<dbReference type="FunFam" id="3.30.1360.70:FF:000005">
    <property type="entry name" value="Arginine--tRNA ligase"/>
    <property type="match status" value="1"/>
</dbReference>
<dbReference type="FunFam" id="3.40.50.620:FF:000116">
    <property type="entry name" value="Arginine--tRNA ligase"/>
    <property type="match status" value="1"/>
</dbReference>
<dbReference type="Gene3D" id="3.30.1360.70">
    <property type="entry name" value="Arginyl tRNA synthetase N-terminal domain"/>
    <property type="match status" value="1"/>
</dbReference>
<dbReference type="Gene3D" id="3.40.50.620">
    <property type="entry name" value="HUPs"/>
    <property type="match status" value="1"/>
</dbReference>
<dbReference type="Gene3D" id="1.10.730.10">
    <property type="entry name" value="Isoleucyl-tRNA Synthetase, Domain 1"/>
    <property type="match status" value="1"/>
</dbReference>
<dbReference type="HAMAP" id="MF_00123">
    <property type="entry name" value="Arg_tRNA_synth"/>
    <property type="match status" value="1"/>
</dbReference>
<dbReference type="InterPro" id="IPR001412">
    <property type="entry name" value="aa-tRNA-synth_I_CS"/>
</dbReference>
<dbReference type="InterPro" id="IPR001278">
    <property type="entry name" value="Arg-tRNA-ligase"/>
</dbReference>
<dbReference type="InterPro" id="IPR005148">
    <property type="entry name" value="Arg-tRNA-synth_N"/>
</dbReference>
<dbReference type="InterPro" id="IPR036695">
    <property type="entry name" value="Arg-tRNA-synth_N_sf"/>
</dbReference>
<dbReference type="InterPro" id="IPR035684">
    <property type="entry name" value="ArgRS_core"/>
</dbReference>
<dbReference type="InterPro" id="IPR008909">
    <property type="entry name" value="DALR_anticod-bd"/>
</dbReference>
<dbReference type="InterPro" id="IPR014729">
    <property type="entry name" value="Rossmann-like_a/b/a_fold"/>
</dbReference>
<dbReference type="InterPro" id="IPR009080">
    <property type="entry name" value="tRNAsynth_Ia_anticodon-bd"/>
</dbReference>
<dbReference type="NCBIfam" id="TIGR00456">
    <property type="entry name" value="argS"/>
    <property type="match status" value="1"/>
</dbReference>
<dbReference type="PANTHER" id="PTHR11956:SF5">
    <property type="entry name" value="ARGININE--TRNA LIGASE, CYTOPLASMIC"/>
    <property type="match status" value="1"/>
</dbReference>
<dbReference type="PANTHER" id="PTHR11956">
    <property type="entry name" value="ARGINYL-TRNA SYNTHETASE"/>
    <property type="match status" value="1"/>
</dbReference>
<dbReference type="Pfam" id="PF03485">
    <property type="entry name" value="Arg_tRNA_synt_N"/>
    <property type="match status" value="1"/>
</dbReference>
<dbReference type="Pfam" id="PF05746">
    <property type="entry name" value="DALR_1"/>
    <property type="match status" value="1"/>
</dbReference>
<dbReference type="Pfam" id="PF00750">
    <property type="entry name" value="tRNA-synt_1d"/>
    <property type="match status" value="1"/>
</dbReference>
<dbReference type="PRINTS" id="PR01038">
    <property type="entry name" value="TRNASYNTHARG"/>
</dbReference>
<dbReference type="SMART" id="SM01016">
    <property type="entry name" value="Arg_tRNA_synt_N"/>
    <property type="match status" value="1"/>
</dbReference>
<dbReference type="SMART" id="SM00836">
    <property type="entry name" value="DALR_1"/>
    <property type="match status" value="1"/>
</dbReference>
<dbReference type="SUPFAM" id="SSF47323">
    <property type="entry name" value="Anticodon-binding domain of a subclass of class I aminoacyl-tRNA synthetases"/>
    <property type="match status" value="1"/>
</dbReference>
<dbReference type="SUPFAM" id="SSF55190">
    <property type="entry name" value="Arginyl-tRNA synthetase (ArgRS), N-terminal 'additional' domain"/>
    <property type="match status" value="1"/>
</dbReference>
<dbReference type="SUPFAM" id="SSF52374">
    <property type="entry name" value="Nucleotidylyl transferase"/>
    <property type="match status" value="1"/>
</dbReference>
<dbReference type="PROSITE" id="PS00178">
    <property type="entry name" value="AA_TRNA_LIGASE_I"/>
    <property type="match status" value="1"/>
</dbReference>
<reference key="1">
    <citation type="submission" date="2008-05" db="EMBL/GenBank/DDBJ databases">
        <title>Genome sequence of Clostridium botulinum Ba4 strain 657.</title>
        <authorList>
            <person name="Shrivastava S."/>
            <person name="Brown J.L."/>
            <person name="Bruce D."/>
            <person name="Detter C."/>
            <person name="Munk C."/>
            <person name="Smith L.A."/>
            <person name="Smith T.J."/>
            <person name="Sutton G."/>
            <person name="Brettin T.S."/>
        </authorList>
    </citation>
    <scope>NUCLEOTIDE SEQUENCE [LARGE SCALE GENOMIC DNA]</scope>
    <source>
        <strain>657 / Type Ba4</strain>
    </source>
</reference>